<evidence type="ECO:0000250" key="1">
    <source>
        <dbReference type="UniProtKB" id="P0DTC9"/>
    </source>
</evidence>
<evidence type="ECO:0000255" key="2">
    <source>
        <dbReference type="HAMAP-Rule" id="MF_04096"/>
    </source>
</evidence>
<evidence type="ECO:0000255" key="3">
    <source>
        <dbReference type="PROSITE-ProRule" id="PRU01276"/>
    </source>
</evidence>
<evidence type="ECO:0000255" key="4">
    <source>
        <dbReference type="PROSITE-ProRule" id="PRU01277"/>
    </source>
</evidence>
<evidence type="ECO:0000256" key="5">
    <source>
        <dbReference type="SAM" id="MobiDB-lite"/>
    </source>
</evidence>
<evidence type="ECO:0000269" key="6">
    <source>
    </source>
</evidence>
<evidence type="ECO:0000269" key="7">
    <source>
    </source>
</evidence>
<evidence type="ECO:0000269" key="8">
    <source>
    </source>
</evidence>
<evidence type="ECO:0000269" key="9">
    <source>
    </source>
</evidence>
<evidence type="ECO:0000269" key="10">
    <source>
    </source>
</evidence>
<evidence type="ECO:0000269" key="11">
    <source>
    </source>
</evidence>
<evidence type="ECO:0007829" key="12">
    <source>
        <dbReference type="PDB" id="3HD4"/>
    </source>
</evidence>
<proteinExistence type="evidence at protein level"/>
<reference key="1">
    <citation type="journal article" date="1983" name="Nucleic Acids Res.">
        <title>Sequence of the nucleocapsid gene from murine coronavirus MHV-A59.</title>
        <authorList>
            <person name="Armstrong J."/>
            <person name="Smeekens S."/>
            <person name="Rottier P.J.M."/>
        </authorList>
    </citation>
    <scope>NUCLEOTIDE SEQUENCE [GENOMIC RNA]</scope>
</reference>
<reference key="2">
    <citation type="book" date="1984" name="Molecular biology and pathogenesis of coronaviruses">
        <title>Cloning and sequencing of the nucleocapsid and E1 genes of coronavirus.</title>
        <editorList>
            <person name="Rottier P.J.M."/>
            <person name="van der Zeijst B.A.M."/>
            <person name="Spaan W.J.M."/>
            <person name="Horzinek M."/>
        </editorList>
        <authorList>
            <person name="Armstrong J."/>
            <person name="Smeekens S."/>
            <person name="Spaan W.J.M."/>
            <person name="Rottier P.J.M."/>
            <person name="van der Zeijst B.A.M."/>
        </authorList>
    </citation>
    <scope>NUCLEOTIDE SEQUENCE</scope>
    <scope>SEQUENCE REVISION</scope>
</reference>
<reference key="3">
    <citation type="journal article" date="1990" name="Virology">
        <title>Sequence comparison of the N genes of five strains of the coronavirus mouse hepatitis virus suggests a three domain structure for the nucleocapsid protein.</title>
        <authorList>
            <person name="Parker M.M."/>
            <person name="Masters P.S."/>
        </authorList>
    </citation>
    <scope>NUCLEOTIDE SEQUENCE [GENOMIC RNA]</scope>
</reference>
<reference key="4">
    <citation type="journal article" date="1997" name="Virology">
        <title>Altered pathogenesis of a mutant of the murine coronavirus MHV-A59 is associated with a Q159L amino acid substitution in the spike protein.</title>
        <authorList>
            <person name="Leparc-Goffart I."/>
            <person name="Hingley S.T."/>
            <person name="Chua M.M."/>
            <person name="Jiang X."/>
            <person name="Lavi E."/>
            <person name="Weiss S.R."/>
        </authorList>
    </citation>
    <scope>NUCLEOTIDE SEQUENCE [GENOMIC RNA]</scope>
    <source>
        <strain>Isolate C12 mutant</strain>
    </source>
</reference>
<reference key="5">
    <citation type="journal article" date="1993" name="Virology">
        <title>Evidence for new transcriptional units encoded at the 3' end of the mouse hepatitis virus genome.</title>
        <authorList>
            <person name="Schaad M.C."/>
            <person name="Baric R.S."/>
        </authorList>
    </citation>
    <scope>NUCLEOTIDE SEQUENCE [GENOMIC DNA] OF 301-454</scope>
</reference>
<reference key="6">
    <citation type="journal article" date="2003" name="J. Biol. Chem.">
        <title>Induction of prothrombinase fgl2 by the nucleocapsid protein of virulent mouse hepatitis virus is dependent on host hepatic nuclear factor-4 alpha.</title>
        <authorList>
            <person name="Ning Q."/>
            <person name="Lakatoo S."/>
            <person name="Liu M."/>
            <person name="Yang W."/>
            <person name="Wang Z."/>
            <person name="Phillips M.J."/>
            <person name="Levy G.A."/>
        </authorList>
    </citation>
    <scope>FUNCTION</scope>
</reference>
<reference key="7">
    <citation type="journal article" date="2007" name="Virus Res.">
        <title>Identification of mouse hepatitis coronavirus A59 nucleocapsid protein phosphorylation sites.</title>
        <authorList>
            <person name="White T.C."/>
            <person name="Yi Z."/>
            <person name="Hogue B.G."/>
        </authorList>
    </citation>
    <scope>PHOSPHORYLATION AT SER-162; SER-170; THR-177; SER-389; SER-424 AND THR-428</scope>
</reference>
<reference key="8">
    <citation type="journal article" date="2007" name="Virology">
        <title>The intracellular sites of early replication and budding of SARS-coronavirus.</title>
        <authorList>
            <person name="Stertz S."/>
            <person name="Reichelt M."/>
            <person name="Spiegel M."/>
            <person name="Kuri T."/>
            <person name="Martinez-Sobrido L."/>
            <person name="Garcia-Sastre A."/>
            <person name="Weber F."/>
            <person name="Kochs G."/>
        </authorList>
    </citation>
    <scope>SUBCELLULAR LOCATION</scope>
    <scope>FUNCTION</scope>
</reference>
<reference key="9">
    <citation type="journal article" date="2013" name="J. Virol.">
        <title>Characterization of a critical interaction between the coronavirus nucleocapsid protein and nonstructural protein 3 of the viral replicase-transcriptase complex.</title>
        <authorList>
            <person name="Hurst K.R."/>
            <person name="Koetzner C.A."/>
            <person name="Masters P.S."/>
        </authorList>
    </citation>
    <scope>FUNCTION</scope>
    <scope>INTERACTION WITH NSP3</scope>
</reference>
<reference key="10">
    <citation type="journal article" date="2017" name="Oncotarget">
        <title>The nucleocapsid proteins of mouse hepatitis virus and severe acute respiratory syndrome coronavirus share the same IFN-beta antagonizing mechanism: attenuation of PACT-mediated RIG-I/ MDA5 activation.</title>
        <authorList>
            <person name="Ding Z."/>
            <person name="Fang L."/>
            <person name="Yuan S."/>
            <person name="Zhao L."/>
            <person name="Wang X."/>
            <person name="Long S."/>
            <person name="Wang M."/>
            <person name="Wang D."/>
            <person name="Foda M.F."/>
            <person name="Xiao S."/>
        </authorList>
    </citation>
    <scope>FUNCTION</scope>
</reference>
<reference key="11">
    <citation type="journal article" date="2017" name="Sci. Rep.">
        <title>Coronavirus nucleocapsid proteins assemble constitutively in high molecular oligomers.</title>
        <authorList>
            <person name="Cong Y."/>
            <person name="Kriegenburg F."/>
            <person name="de Haan C.A.M."/>
            <person name="Reggiori F."/>
        </authorList>
    </citation>
    <scope>SUBUNIT</scope>
</reference>
<reference key="12">
    <citation type="journal article" date="2018" name="Virology">
        <title>The coronavirus nucleocapsid protein is ADP-ribosylated.</title>
        <authorList>
            <person name="Grunewald M.E."/>
            <person name="Fehr A.R."/>
            <person name="Athmer J."/>
            <person name="Perlman S."/>
        </authorList>
    </citation>
    <scope>ADP-RIBOSYLATION</scope>
    <scope>SUBCELLULAR LOCATION</scope>
</reference>
<reference key="13">
    <citation type="journal article" date="2009" name="J. Mol. Biol.">
        <title>Coronavirus N protein N-terminal domain (NTD) specifically binds the transcriptional regulatory sequence (TRS) and melts TRS-cTRS RNA duplexes.</title>
        <authorList>
            <person name="Grossoehme N.E."/>
            <person name="Li L."/>
            <person name="Keane S.C."/>
            <person name="Liu P."/>
            <person name="Dann C.E. III"/>
            <person name="Leibowitz J.L."/>
            <person name="Giedroc D.P."/>
        </authorList>
    </citation>
    <scope>X-RAY CRYSTALLOGRAPHY (1.75 ANGSTROMS) OF 60-197</scope>
</reference>
<gene>
    <name evidence="2" type="primary">N</name>
    <name type="ORF">7a</name>
</gene>
<name>NCAP_CVMA5</name>
<dbReference type="EMBL" id="X00509">
    <property type="protein sequence ID" value="CAA25198.1"/>
    <property type="molecule type" value="Genomic_RNA"/>
</dbReference>
<dbReference type="EMBL" id="M35256">
    <property type="protein sequence ID" value="AAA46447.1"/>
    <property type="molecule type" value="Genomic_RNA"/>
</dbReference>
<dbReference type="EMBL" id="AF029248">
    <property type="protein sequence ID" value="AAB86821.1"/>
    <property type="molecule type" value="Genomic_RNA"/>
</dbReference>
<dbReference type="EMBL" id="S64884">
    <property type="protein sequence ID" value="AAB27902.1"/>
    <property type="molecule type" value="Genomic_DNA"/>
</dbReference>
<dbReference type="PIR" id="A45340">
    <property type="entry name" value="A45340"/>
</dbReference>
<dbReference type="RefSeq" id="NP_045302.1">
    <property type="nucleotide sequence ID" value="NC_001846.1"/>
</dbReference>
<dbReference type="PDB" id="3HD4">
    <property type="method" value="X-ray"/>
    <property type="resolution" value="1.75 A"/>
    <property type="chains" value="A=60-197"/>
</dbReference>
<dbReference type="PDBsum" id="3HD4"/>
<dbReference type="BMRB" id="P03416"/>
<dbReference type="SMR" id="P03416"/>
<dbReference type="IntAct" id="P03416">
    <property type="interactions" value="2"/>
</dbReference>
<dbReference type="iPTMnet" id="P03416"/>
<dbReference type="GeneID" id="1489757"/>
<dbReference type="KEGG" id="vg:1489757"/>
<dbReference type="EvolutionaryTrace" id="P03416"/>
<dbReference type="Proteomes" id="UP000007192">
    <property type="component" value="Segment"/>
</dbReference>
<dbReference type="GO" id="GO:0044172">
    <property type="term" value="C:host cell endoplasmic reticulum-Golgi intermediate compartment"/>
    <property type="evidence" value="ECO:0007669"/>
    <property type="project" value="UniProtKB-SubCell"/>
</dbReference>
<dbReference type="GO" id="GO:0044177">
    <property type="term" value="C:host cell Golgi apparatus"/>
    <property type="evidence" value="ECO:0007669"/>
    <property type="project" value="UniProtKB-SubCell"/>
</dbReference>
<dbReference type="GO" id="GO:1990904">
    <property type="term" value="C:ribonucleoprotein complex"/>
    <property type="evidence" value="ECO:0007669"/>
    <property type="project" value="UniProtKB-KW"/>
</dbReference>
<dbReference type="GO" id="GO:0019013">
    <property type="term" value="C:viral nucleocapsid"/>
    <property type="evidence" value="ECO:0007669"/>
    <property type="project" value="UniProtKB-UniRule"/>
</dbReference>
<dbReference type="GO" id="GO:0003723">
    <property type="term" value="F:RNA binding"/>
    <property type="evidence" value="ECO:0007669"/>
    <property type="project" value="UniProtKB-UniRule"/>
</dbReference>
<dbReference type="GO" id="GO:0085033">
    <property type="term" value="P:symbiont-mediated activation of host NF-kappaB cascade"/>
    <property type="evidence" value="ECO:0000269"/>
    <property type="project" value="SigSci"/>
</dbReference>
<dbReference type="GO" id="GO:0141155">
    <property type="term" value="P:symbiont-mediated suppression of host translation elongation"/>
    <property type="evidence" value="ECO:0000269"/>
    <property type="project" value="SigSci"/>
</dbReference>
<dbReference type="CDD" id="cd21595">
    <property type="entry name" value="CoV_N-CTD"/>
    <property type="match status" value="1"/>
</dbReference>
<dbReference type="CDD" id="cd21554">
    <property type="entry name" value="CoV_N-NTD"/>
    <property type="match status" value="1"/>
</dbReference>
<dbReference type="HAMAP" id="MF_04096">
    <property type="entry name" value="BETA_CORONA_NCAP"/>
    <property type="match status" value="1"/>
</dbReference>
<dbReference type="InterPro" id="IPR044344">
    <property type="entry name" value="N_prot_C_CoV"/>
</dbReference>
<dbReference type="InterPro" id="IPR044345">
    <property type="entry name" value="N_prot_N_CoV"/>
</dbReference>
<dbReference type="InterPro" id="IPR043505">
    <property type="entry name" value="NCAP_bCoV"/>
</dbReference>
<dbReference type="InterPro" id="IPR001218">
    <property type="entry name" value="Nucleocap_CoV"/>
</dbReference>
<dbReference type="InterPro" id="IPR037179">
    <property type="entry name" value="Nucleocapsid_C"/>
</dbReference>
<dbReference type="InterPro" id="IPR037195">
    <property type="entry name" value="Nucleocapsid_N"/>
</dbReference>
<dbReference type="Pfam" id="PF00937">
    <property type="entry name" value="CoV_nucleocap"/>
    <property type="match status" value="1"/>
</dbReference>
<dbReference type="PIRSF" id="PIRSF003888">
    <property type="entry name" value="Corona_nucleocap"/>
    <property type="match status" value="1"/>
</dbReference>
<dbReference type="SUPFAM" id="SSF110304">
    <property type="entry name" value="Coronavirus RNA-binding domain"/>
    <property type="match status" value="1"/>
</dbReference>
<dbReference type="SUPFAM" id="SSF103068">
    <property type="entry name" value="Nucleocapsid protein dimerization domain"/>
    <property type="match status" value="1"/>
</dbReference>
<dbReference type="PROSITE" id="PS51929">
    <property type="entry name" value="COV_N_CTD"/>
    <property type="match status" value="1"/>
</dbReference>
<dbReference type="PROSITE" id="PS51928">
    <property type="entry name" value="COV_N_NTD"/>
    <property type="match status" value="1"/>
</dbReference>
<protein>
    <recommendedName>
        <fullName evidence="2">Nucleoprotein</fullName>
    </recommendedName>
    <alternativeName>
        <fullName evidence="2">Nucleocapsid protein</fullName>
        <shortName evidence="2">NC</shortName>
        <shortName evidence="2">Protein N</shortName>
    </alternativeName>
</protein>
<feature type="chain" id="PRO_0000106007" description="Nucleoprotein">
    <location>
        <begin position="1"/>
        <end position="454"/>
    </location>
</feature>
<feature type="domain" description="CoV N NTD" evidence="3">
    <location>
        <begin position="64"/>
        <end position="193"/>
    </location>
</feature>
<feature type="domain" description="CoV N CTD" evidence="4">
    <location>
        <begin position="260"/>
        <end position="383"/>
    </location>
</feature>
<feature type="region of interest" description="Disordered" evidence="5">
    <location>
        <begin position="1"/>
        <end position="62"/>
    </location>
</feature>
<feature type="region of interest" description="RNA-binding" evidence="2">
    <location>
        <begin position="56"/>
        <end position="197"/>
    </location>
</feature>
<feature type="region of interest" description="Disordered" evidence="5">
    <location>
        <begin position="160"/>
        <end position="179"/>
    </location>
</feature>
<feature type="region of interest" description="Disordered" evidence="5">
    <location>
        <begin position="186"/>
        <end position="230"/>
    </location>
</feature>
<feature type="region of interest" description="Dimerization" evidence="2">
    <location>
        <begin position="267"/>
        <end position="383"/>
    </location>
</feature>
<feature type="region of interest" description="Disordered" evidence="5">
    <location>
        <begin position="271"/>
        <end position="292"/>
    </location>
</feature>
<feature type="region of interest" description="Disordered" evidence="5">
    <location>
        <begin position="382"/>
        <end position="428"/>
    </location>
</feature>
<feature type="compositionally biased region" description="Polar residues" evidence="5">
    <location>
        <begin position="50"/>
        <end position="61"/>
    </location>
</feature>
<feature type="compositionally biased region" description="Low complexity" evidence="5">
    <location>
        <begin position="193"/>
        <end position="212"/>
    </location>
</feature>
<feature type="compositionally biased region" description="Polar residues" evidence="5">
    <location>
        <begin position="215"/>
        <end position="227"/>
    </location>
</feature>
<feature type="binding site" evidence="1">
    <location>
        <position position="109"/>
    </location>
    <ligand>
        <name>RNA</name>
        <dbReference type="ChEBI" id="CHEBI:33697"/>
    </ligand>
</feature>
<feature type="binding site" evidence="1">
    <location>
        <position position="125"/>
    </location>
    <ligand>
        <name>RNA</name>
        <dbReference type="ChEBI" id="CHEBI:33697"/>
    </ligand>
</feature>
<feature type="binding site" evidence="1">
    <location>
        <position position="167"/>
    </location>
    <ligand>
        <name>RNA</name>
        <dbReference type="ChEBI" id="CHEBI:33697"/>
    </ligand>
</feature>
<feature type="modified residue" description="Phosphoserine; by host" evidence="2 8">
    <location>
        <position position="162"/>
    </location>
</feature>
<feature type="modified residue" description="Phosphoserine; by host" evidence="2 8">
    <location>
        <position position="170"/>
    </location>
</feature>
<feature type="modified residue" description="Phosphothreonine; by host" evidence="2 8">
    <location>
        <position position="177"/>
    </location>
</feature>
<feature type="modified residue" description="Phosphoserine; by host" evidence="2">
    <location>
        <position position="194"/>
    </location>
</feature>
<feature type="modified residue" description="Phosphoserine; by host" evidence="2 8">
    <location>
        <position position="389"/>
    </location>
</feature>
<feature type="modified residue" description="Phosphoserine; by host" evidence="2 8">
    <location>
        <position position="424"/>
    </location>
</feature>
<feature type="modified residue" description="Phosphothreonine; by host" evidence="2 8">
    <location>
        <position position="428"/>
    </location>
</feature>
<feature type="sequence conflict" description="In Ref. 1 and 2." ref="1 2">
    <original>E</original>
    <variation>K</variation>
    <location>
        <position position="262"/>
    </location>
</feature>
<feature type="strand" evidence="12">
    <location>
        <begin position="72"/>
        <end position="74"/>
    </location>
</feature>
<feature type="helix" evidence="12">
    <location>
        <begin position="97"/>
        <end position="99"/>
    </location>
</feature>
<feature type="strand" evidence="12">
    <location>
        <begin position="101"/>
        <end position="107"/>
    </location>
</feature>
<feature type="strand" evidence="12">
    <location>
        <begin position="111"/>
        <end position="113"/>
    </location>
</feature>
<feature type="strand" evidence="12">
    <location>
        <begin position="115"/>
        <end position="117"/>
    </location>
</feature>
<feature type="strand" evidence="12">
    <location>
        <begin position="119"/>
        <end position="121"/>
    </location>
</feature>
<feature type="strand" evidence="12">
    <location>
        <begin position="125"/>
        <end position="130"/>
    </location>
</feature>
<feature type="turn" evidence="12">
    <location>
        <begin position="135"/>
        <end position="138"/>
    </location>
</feature>
<feature type="strand" evidence="12">
    <location>
        <begin position="148"/>
        <end position="152"/>
    </location>
</feature>
<feature type="turn" evidence="12">
    <location>
        <begin position="169"/>
        <end position="171"/>
    </location>
</feature>
<feature type="strand" evidence="12">
    <location>
        <begin position="189"/>
        <end position="191"/>
    </location>
</feature>
<keyword id="KW-0002">3D-structure</keyword>
<keyword id="KW-0013">ADP-ribosylation</keyword>
<keyword id="KW-1040">Host Golgi apparatus</keyword>
<keyword id="KW-0597">Phosphoprotein</keyword>
<keyword id="KW-1185">Reference proteome</keyword>
<keyword id="KW-0687">Ribonucleoprotein</keyword>
<keyword id="KW-0694">RNA-binding</keyword>
<keyword id="KW-0804">Transcription</keyword>
<keyword id="KW-0805">Transcription regulation</keyword>
<keyword id="KW-0543">Viral nucleoprotein</keyword>
<keyword id="KW-0946">Virion</keyword>
<organismHost>
    <name type="scientific">Mus musculus</name>
    <name type="common">Mouse</name>
    <dbReference type="NCBI Taxonomy" id="10090"/>
</organismHost>
<organism>
    <name type="scientific">Murine coronavirus (strain A59)</name>
    <name type="common">MHV-A59</name>
    <name type="synonym">Murine hepatitis virus</name>
    <dbReference type="NCBI Taxonomy" id="11142"/>
    <lineage>
        <taxon>Viruses</taxon>
        <taxon>Riboviria</taxon>
        <taxon>Orthornavirae</taxon>
        <taxon>Pisuviricota</taxon>
        <taxon>Pisoniviricetes</taxon>
        <taxon>Nidovirales</taxon>
        <taxon>Cornidovirineae</taxon>
        <taxon>Coronaviridae</taxon>
        <taxon>Orthocoronavirinae</taxon>
        <taxon>Betacoronavirus</taxon>
        <taxon>Embecovirus</taxon>
        <taxon>Murine coronavirus</taxon>
    </lineage>
</organism>
<accession>P03416</accession>
<accession>P18449</accession>
<accession>Q86648</accession>
<comment type="function">
    <text evidence="2 6 7 9">Packages the positive strand viral genome RNA into a helical ribonucleocapsid (RNP) and plays a fundamental role during virion assembly through its interactions with the viral genome and membrane protein M. Plays an important role in enhancing the efficiency of subgenomic viral RNA transcription as well as viral replication.</text>
</comment>
<comment type="subunit">
    <text evidence="2 9 10">Homooligomer. Both monomeric and oligomeric forms interact with RNA. Interacts with protein M. Interacts with NSP3; this interaction serves to tether the genome to the newly translated replicase-transcriptase complex at a very early stage of infection.</text>
</comment>
<comment type="interaction">
    <interactant intactId="EBI-25639341">
        <id>P03416</id>
    </interactant>
    <interactant intactId="EBI-713955">
        <id>O75569</id>
        <label>PRKRA</label>
    </interactant>
    <organismsDiffer>true</organismsDiffer>
    <experiments>6</experiments>
</comment>
<comment type="subcellular location">
    <subcellularLocation>
        <location evidence="2 11">Virion</location>
    </subcellularLocation>
    <subcellularLocation>
        <location evidence="2 7">Host endoplasmic reticulum-Golgi intermediate compartment</location>
    </subcellularLocation>
    <subcellularLocation>
        <location evidence="2">Host Golgi apparatus</location>
    </subcellularLocation>
    <text evidence="2 7">Located inside the virion, complexed with the viral RNA. Probably associates with ER-derived membranes where it participates in viral RNA synthesis and virus budding.</text>
</comment>
<comment type="PTM">
    <text evidence="2 11">ADP-ribosylated. The ADP-ribosylation is retained in the virion during infection.</text>
</comment>
<comment type="PTM">
    <text evidence="2 8">Phosphorylated on serine and threonine residues.</text>
</comment>
<comment type="similarity">
    <text evidence="2">Belongs to the betacoronavirus nucleocapsid protein family.</text>
</comment>
<sequence>MSFVPGQENAGGRSSSVNRAGNGILKKTTWADQTERGPNNQNRGRRNQPKQTATTQPNSGSVVPHYSWFSGITQFQKGKEFQFAEGQGVPIANGIPASEQKGYWYRHNRRSFKTPDGQQKQLLPRWYFYYLGTGPHAGASYGDSIEGVFWVANSQADTNTRSDIVERDPSSHEAIPTRFAPGTVLPQGFYVEGSGRSAPASRSGSRSQSRGPNNRARSSSNQRQPASTVKPDMAEEIAALVLAKLGKDAGQPKQVTKQSAKEVRQKILNKPRQKRTPNKQCPVQQCFGKRGPNQNFGGSEMLKLGTSDPQFPILAELAPTVGAFFFGSKLELVKKNSGGADEPTKDVYELQYSGAVRFDSTLPGFETIMKVLNENLNAYQKDGGADVVSPKPQRKGRRQAQEKKDEVDNVSVAKPKSSVQRNVSRELTPEDRSLLAQILDDGVVPDGLEDDSNV</sequence>